<protein>
    <recommendedName>
        <fullName>Mediator of RNA polymerase II transcription subunit 7</fullName>
    </recommendedName>
    <alternativeName>
        <fullName>Mediator complex subunit 7</fullName>
    </alternativeName>
</protein>
<feature type="chain" id="PRO_0000303200" description="Mediator of RNA polymerase II transcription subunit 7">
    <location>
        <begin position="1"/>
        <end position="239"/>
    </location>
</feature>
<feature type="region of interest" description="Disordered" evidence="2">
    <location>
        <begin position="1"/>
        <end position="21"/>
    </location>
</feature>
<feature type="region of interest" description="Disordered" evidence="2">
    <location>
        <begin position="43"/>
        <end position="66"/>
    </location>
</feature>
<feature type="compositionally biased region" description="Basic and acidic residues" evidence="2">
    <location>
        <begin position="46"/>
        <end position="66"/>
    </location>
</feature>
<dbReference type="EMBL" id="AE017353">
    <property type="protein sequence ID" value="AAW46758.1"/>
    <property type="molecule type" value="Genomic_DNA"/>
</dbReference>
<dbReference type="RefSeq" id="XP_568275.1">
    <property type="nucleotide sequence ID" value="XM_568275.1"/>
</dbReference>
<dbReference type="SMR" id="P0CO76"/>
<dbReference type="STRING" id="214684.P0CO76"/>
<dbReference type="PaxDb" id="214684-P0CO76"/>
<dbReference type="EnsemblFungi" id="AAW46758">
    <property type="protein sequence ID" value="AAW46758"/>
    <property type="gene ID" value="CNM01330"/>
</dbReference>
<dbReference type="GeneID" id="3255096"/>
<dbReference type="KEGG" id="cne:CNM01330"/>
<dbReference type="VEuPathDB" id="FungiDB:CNM01330"/>
<dbReference type="eggNOG" id="ENOG502SAJI">
    <property type="taxonomic scope" value="Eukaryota"/>
</dbReference>
<dbReference type="HOGENOM" id="CLU_1120792_0_0_1"/>
<dbReference type="InParanoid" id="P0CO76"/>
<dbReference type="OMA" id="RERCESM"/>
<dbReference type="OrthoDB" id="10253553at2759"/>
<dbReference type="Proteomes" id="UP000002149">
    <property type="component" value="Chromosome 13"/>
</dbReference>
<dbReference type="GO" id="GO:0070847">
    <property type="term" value="C:core mediator complex"/>
    <property type="evidence" value="ECO:0000318"/>
    <property type="project" value="GO_Central"/>
</dbReference>
<dbReference type="GO" id="GO:0016592">
    <property type="term" value="C:mediator complex"/>
    <property type="evidence" value="ECO:0000318"/>
    <property type="project" value="GO_Central"/>
</dbReference>
<dbReference type="GO" id="GO:0003712">
    <property type="term" value="F:transcription coregulator activity"/>
    <property type="evidence" value="ECO:0007669"/>
    <property type="project" value="InterPro"/>
</dbReference>
<dbReference type="GO" id="GO:0006357">
    <property type="term" value="P:regulation of transcription by RNA polymerase II"/>
    <property type="evidence" value="ECO:0000318"/>
    <property type="project" value="GO_Central"/>
</dbReference>
<dbReference type="Gene3D" id="6.10.140.1520">
    <property type="match status" value="1"/>
</dbReference>
<dbReference type="Gene3D" id="6.10.140.200">
    <property type="match status" value="1"/>
</dbReference>
<dbReference type="InterPro" id="IPR037212">
    <property type="entry name" value="Med7/Med21-like"/>
</dbReference>
<dbReference type="InterPro" id="IPR009244">
    <property type="entry name" value="Mediatior_Med7"/>
</dbReference>
<dbReference type="InterPro" id="IPR044888">
    <property type="entry name" value="Mediatior_Med7_sf"/>
</dbReference>
<dbReference type="PANTHER" id="PTHR21428">
    <property type="entry name" value="MEDIATOR OF RNA POLYMERASE II TRANSCRIPTION SUBUNIT 7"/>
    <property type="match status" value="1"/>
</dbReference>
<dbReference type="PANTHER" id="PTHR21428:SF11">
    <property type="entry name" value="MEDIATOR OF RNA POLYMERASE II TRANSCRIPTION SUBUNIT 7"/>
    <property type="match status" value="1"/>
</dbReference>
<dbReference type="Pfam" id="PF05983">
    <property type="entry name" value="Med7"/>
    <property type="match status" value="1"/>
</dbReference>
<dbReference type="SUPFAM" id="SSF140718">
    <property type="entry name" value="Mediator hinge subcomplex-like"/>
    <property type="match status" value="1"/>
</dbReference>
<evidence type="ECO:0000250" key="1"/>
<evidence type="ECO:0000256" key="2">
    <source>
        <dbReference type="SAM" id="MobiDB-lite"/>
    </source>
</evidence>
<evidence type="ECO:0000305" key="3"/>
<name>MED7_CRYNJ</name>
<organism>
    <name type="scientific">Cryptococcus neoformans var. neoformans serotype D (strain JEC21 / ATCC MYA-565)</name>
    <name type="common">Filobasidiella neoformans</name>
    <dbReference type="NCBI Taxonomy" id="214684"/>
    <lineage>
        <taxon>Eukaryota</taxon>
        <taxon>Fungi</taxon>
        <taxon>Dikarya</taxon>
        <taxon>Basidiomycota</taxon>
        <taxon>Agaricomycotina</taxon>
        <taxon>Tremellomycetes</taxon>
        <taxon>Tremellales</taxon>
        <taxon>Cryptococcaceae</taxon>
        <taxon>Cryptococcus</taxon>
        <taxon>Cryptococcus neoformans species complex</taxon>
    </lineage>
</organism>
<reference key="1">
    <citation type="journal article" date="2005" name="Science">
        <title>The genome of the basidiomycetous yeast and human pathogen Cryptococcus neoformans.</title>
        <authorList>
            <person name="Loftus B.J."/>
            <person name="Fung E."/>
            <person name="Roncaglia P."/>
            <person name="Rowley D."/>
            <person name="Amedeo P."/>
            <person name="Bruno D."/>
            <person name="Vamathevan J."/>
            <person name="Miranda M."/>
            <person name="Anderson I.J."/>
            <person name="Fraser J.A."/>
            <person name="Allen J.E."/>
            <person name="Bosdet I.E."/>
            <person name="Brent M.R."/>
            <person name="Chiu R."/>
            <person name="Doering T.L."/>
            <person name="Donlin M.J."/>
            <person name="D'Souza C.A."/>
            <person name="Fox D.S."/>
            <person name="Grinberg V."/>
            <person name="Fu J."/>
            <person name="Fukushima M."/>
            <person name="Haas B.J."/>
            <person name="Huang J.C."/>
            <person name="Janbon G."/>
            <person name="Jones S.J.M."/>
            <person name="Koo H.L."/>
            <person name="Krzywinski M.I."/>
            <person name="Kwon-Chung K.J."/>
            <person name="Lengeler K.B."/>
            <person name="Maiti R."/>
            <person name="Marra M.A."/>
            <person name="Marra R.E."/>
            <person name="Mathewson C.A."/>
            <person name="Mitchell T.G."/>
            <person name="Pertea M."/>
            <person name="Riggs F.R."/>
            <person name="Salzberg S.L."/>
            <person name="Schein J.E."/>
            <person name="Shvartsbeyn A."/>
            <person name="Shin H."/>
            <person name="Shumway M."/>
            <person name="Specht C.A."/>
            <person name="Suh B.B."/>
            <person name="Tenney A."/>
            <person name="Utterback T.R."/>
            <person name="Wickes B.L."/>
            <person name="Wortman J.R."/>
            <person name="Wye N.H."/>
            <person name="Kronstad J.W."/>
            <person name="Lodge J.K."/>
            <person name="Heitman J."/>
            <person name="Davis R.W."/>
            <person name="Fraser C.M."/>
            <person name="Hyman R.W."/>
        </authorList>
    </citation>
    <scope>NUCLEOTIDE SEQUENCE [LARGE SCALE GENOMIC DNA]</scope>
    <source>
        <strain>JEC21 / ATCC MYA-565</strain>
    </source>
</reference>
<sequence length="239" mass="26889">MSSLPQEAALPITNTLFPPPPPYFQAFTDEAIERYETLTGKSLFVNDEKGKTKGKEKKSDDRDMSVDIRIQDLTEEEQNEKLELEGKLEKPRADWVNEDGRWMCFGTMYTTEPIIPTAQSIGLPPFIDPAVEPQESLPPLLHSFLHTLLLLLDTLTMTARTPNELAAAGWASEGDQYIQHLTNLSANMMVASNQLRSAQSEATLVLLMEKELEERRKQTEKLRSKCKEIASGIRALKGL</sequence>
<keyword id="KW-0010">Activator</keyword>
<keyword id="KW-0539">Nucleus</keyword>
<keyword id="KW-1185">Reference proteome</keyword>
<keyword id="KW-0804">Transcription</keyword>
<keyword id="KW-0805">Transcription regulation</keyword>
<proteinExistence type="inferred from homology"/>
<gene>
    <name type="primary">MED7</name>
    <name type="ordered locus">CNM01330</name>
</gene>
<comment type="function">
    <text evidence="1">Component of the Mediator complex, a coactivator involved in the regulated transcription of nearly all RNA polymerase II-dependent genes. Mediator functions as a bridge to convey information from gene-specific regulatory proteins to the basal RNA polymerase II transcription machinery. Mediator is recruited to promoters by direct interactions with regulatory proteins and serves as a scaffold for the assembly of a functional preinitiation complex with RNA polymerase II and the general transcription factors (By similarity).</text>
</comment>
<comment type="subunit">
    <text evidence="1">Component of the Mediator complex.</text>
</comment>
<comment type="subcellular location">
    <subcellularLocation>
        <location evidence="1">Nucleus</location>
    </subcellularLocation>
</comment>
<comment type="similarity">
    <text evidence="3">Belongs to the Mediator complex subunit 7 family.</text>
</comment>
<accession>P0CO76</accession>
<accession>Q55IA0</accession>
<accession>Q5K7T6</accession>